<organism>
    <name type="scientific">Bordetella petrii (strain ATCC BAA-461 / DSM 12804 / CCUG 43448)</name>
    <dbReference type="NCBI Taxonomy" id="340100"/>
    <lineage>
        <taxon>Bacteria</taxon>
        <taxon>Pseudomonadati</taxon>
        <taxon>Pseudomonadota</taxon>
        <taxon>Betaproteobacteria</taxon>
        <taxon>Burkholderiales</taxon>
        <taxon>Alcaligenaceae</taxon>
        <taxon>Bordetella</taxon>
    </lineage>
</organism>
<proteinExistence type="inferred from homology"/>
<accession>A9I4Y3</accession>
<dbReference type="EC" id="7.4.2.8" evidence="1"/>
<dbReference type="EMBL" id="AM902716">
    <property type="protein sequence ID" value="CAP41038.1"/>
    <property type="molecule type" value="Genomic_DNA"/>
</dbReference>
<dbReference type="SMR" id="A9I4Y3"/>
<dbReference type="STRING" id="94624.Bpet0706"/>
<dbReference type="KEGG" id="bpt:Bpet0706"/>
<dbReference type="eggNOG" id="COG0653">
    <property type="taxonomic scope" value="Bacteria"/>
</dbReference>
<dbReference type="Proteomes" id="UP000001225">
    <property type="component" value="Chromosome"/>
</dbReference>
<dbReference type="GO" id="GO:0031522">
    <property type="term" value="C:cell envelope Sec protein transport complex"/>
    <property type="evidence" value="ECO:0007669"/>
    <property type="project" value="TreeGrafter"/>
</dbReference>
<dbReference type="GO" id="GO:0005829">
    <property type="term" value="C:cytosol"/>
    <property type="evidence" value="ECO:0007669"/>
    <property type="project" value="TreeGrafter"/>
</dbReference>
<dbReference type="GO" id="GO:0005886">
    <property type="term" value="C:plasma membrane"/>
    <property type="evidence" value="ECO:0007669"/>
    <property type="project" value="UniProtKB-SubCell"/>
</dbReference>
<dbReference type="GO" id="GO:0005524">
    <property type="term" value="F:ATP binding"/>
    <property type="evidence" value="ECO:0007669"/>
    <property type="project" value="UniProtKB-UniRule"/>
</dbReference>
<dbReference type="GO" id="GO:0046872">
    <property type="term" value="F:metal ion binding"/>
    <property type="evidence" value="ECO:0007669"/>
    <property type="project" value="UniProtKB-KW"/>
</dbReference>
<dbReference type="GO" id="GO:0008564">
    <property type="term" value="F:protein-exporting ATPase activity"/>
    <property type="evidence" value="ECO:0007669"/>
    <property type="project" value="UniProtKB-EC"/>
</dbReference>
<dbReference type="GO" id="GO:0065002">
    <property type="term" value="P:intracellular protein transmembrane transport"/>
    <property type="evidence" value="ECO:0007669"/>
    <property type="project" value="UniProtKB-UniRule"/>
</dbReference>
<dbReference type="GO" id="GO:0017038">
    <property type="term" value="P:protein import"/>
    <property type="evidence" value="ECO:0007669"/>
    <property type="project" value="InterPro"/>
</dbReference>
<dbReference type="GO" id="GO:0006605">
    <property type="term" value="P:protein targeting"/>
    <property type="evidence" value="ECO:0007669"/>
    <property type="project" value="UniProtKB-UniRule"/>
</dbReference>
<dbReference type="GO" id="GO:0043952">
    <property type="term" value="P:protein transport by the Sec complex"/>
    <property type="evidence" value="ECO:0007669"/>
    <property type="project" value="TreeGrafter"/>
</dbReference>
<dbReference type="CDD" id="cd17928">
    <property type="entry name" value="DEXDc_SecA"/>
    <property type="match status" value="1"/>
</dbReference>
<dbReference type="CDD" id="cd18803">
    <property type="entry name" value="SF2_C_secA"/>
    <property type="match status" value="1"/>
</dbReference>
<dbReference type="FunFam" id="3.40.50.300:FF:000113">
    <property type="entry name" value="Preprotein translocase subunit SecA"/>
    <property type="match status" value="1"/>
</dbReference>
<dbReference type="FunFam" id="3.90.1440.10:FF:000001">
    <property type="entry name" value="Preprotein translocase subunit SecA"/>
    <property type="match status" value="1"/>
</dbReference>
<dbReference type="FunFam" id="1.10.3060.10:FF:000003">
    <property type="entry name" value="Protein translocase subunit SecA"/>
    <property type="match status" value="1"/>
</dbReference>
<dbReference type="Gene3D" id="1.10.3060.10">
    <property type="entry name" value="Helical scaffold and wing domains of SecA"/>
    <property type="match status" value="1"/>
</dbReference>
<dbReference type="Gene3D" id="3.40.50.300">
    <property type="entry name" value="P-loop containing nucleotide triphosphate hydrolases"/>
    <property type="match status" value="2"/>
</dbReference>
<dbReference type="Gene3D" id="3.90.1440.10">
    <property type="entry name" value="SecA, preprotein cross-linking domain"/>
    <property type="match status" value="1"/>
</dbReference>
<dbReference type="HAMAP" id="MF_01382">
    <property type="entry name" value="SecA"/>
    <property type="match status" value="1"/>
</dbReference>
<dbReference type="InterPro" id="IPR014001">
    <property type="entry name" value="Helicase_ATP-bd"/>
</dbReference>
<dbReference type="InterPro" id="IPR001650">
    <property type="entry name" value="Helicase_C-like"/>
</dbReference>
<dbReference type="InterPro" id="IPR027417">
    <property type="entry name" value="P-loop_NTPase"/>
</dbReference>
<dbReference type="InterPro" id="IPR004027">
    <property type="entry name" value="SEC_C_motif"/>
</dbReference>
<dbReference type="InterPro" id="IPR000185">
    <property type="entry name" value="SecA"/>
</dbReference>
<dbReference type="InterPro" id="IPR020937">
    <property type="entry name" value="SecA_CS"/>
</dbReference>
<dbReference type="InterPro" id="IPR011115">
    <property type="entry name" value="SecA_DEAD"/>
</dbReference>
<dbReference type="InterPro" id="IPR014018">
    <property type="entry name" value="SecA_motor_DEAD"/>
</dbReference>
<dbReference type="InterPro" id="IPR011130">
    <property type="entry name" value="SecA_preprotein_X-link_dom"/>
</dbReference>
<dbReference type="InterPro" id="IPR044722">
    <property type="entry name" value="SecA_SF2_C"/>
</dbReference>
<dbReference type="InterPro" id="IPR011116">
    <property type="entry name" value="SecA_Wing/Scaffold"/>
</dbReference>
<dbReference type="InterPro" id="IPR036266">
    <property type="entry name" value="SecA_Wing/Scaffold_sf"/>
</dbReference>
<dbReference type="InterPro" id="IPR036670">
    <property type="entry name" value="SecA_X-link_sf"/>
</dbReference>
<dbReference type="NCBIfam" id="NF009538">
    <property type="entry name" value="PRK12904.1"/>
    <property type="match status" value="1"/>
</dbReference>
<dbReference type="NCBIfam" id="TIGR00963">
    <property type="entry name" value="secA"/>
    <property type="match status" value="1"/>
</dbReference>
<dbReference type="PANTHER" id="PTHR30612:SF0">
    <property type="entry name" value="CHLOROPLAST PROTEIN-TRANSPORTING ATPASE"/>
    <property type="match status" value="1"/>
</dbReference>
<dbReference type="PANTHER" id="PTHR30612">
    <property type="entry name" value="SECA INNER MEMBRANE COMPONENT OF SEC PROTEIN SECRETION SYSTEM"/>
    <property type="match status" value="1"/>
</dbReference>
<dbReference type="Pfam" id="PF21090">
    <property type="entry name" value="P-loop_SecA"/>
    <property type="match status" value="1"/>
</dbReference>
<dbReference type="Pfam" id="PF02810">
    <property type="entry name" value="SEC-C"/>
    <property type="match status" value="1"/>
</dbReference>
<dbReference type="Pfam" id="PF07517">
    <property type="entry name" value="SecA_DEAD"/>
    <property type="match status" value="1"/>
</dbReference>
<dbReference type="Pfam" id="PF01043">
    <property type="entry name" value="SecA_PP_bind"/>
    <property type="match status" value="1"/>
</dbReference>
<dbReference type="Pfam" id="PF07516">
    <property type="entry name" value="SecA_SW"/>
    <property type="match status" value="1"/>
</dbReference>
<dbReference type="PRINTS" id="PR00906">
    <property type="entry name" value="SECA"/>
</dbReference>
<dbReference type="SMART" id="SM00957">
    <property type="entry name" value="SecA_DEAD"/>
    <property type="match status" value="1"/>
</dbReference>
<dbReference type="SMART" id="SM00958">
    <property type="entry name" value="SecA_PP_bind"/>
    <property type="match status" value="1"/>
</dbReference>
<dbReference type="SUPFAM" id="SSF81886">
    <property type="entry name" value="Helical scaffold and wing domains of SecA"/>
    <property type="match status" value="1"/>
</dbReference>
<dbReference type="SUPFAM" id="SSF52540">
    <property type="entry name" value="P-loop containing nucleoside triphosphate hydrolases"/>
    <property type="match status" value="2"/>
</dbReference>
<dbReference type="SUPFAM" id="SSF81767">
    <property type="entry name" value="Pre-protein crosslinking domain of SecA"/>
    <property type="match status" value="1"/>
</dbReference>
<dbReference type="PROSITE" id="PS01312">
    <property type="entry name" value="SECA"/>
    <property type="match status" value="1"/>
</dbReference>
<dbReference type="PROSITE" id="PS51196">
    <property type="entry name" value="SECA_MOTOR_DEAD"/>
    <property type="match status" value="1"/>
</dbReference>
<sequence length="914" mass="103096">MVSLLKKLIGSRNDRLLKQYRKLVTQINALESKTAALSDQELAAKTQEFRTRHAEGSSLDDLLPEAFAVVREAGKRVFGMRHFDVQMLGGIALHNGKIAEMRTGEGKTLMATLPVYLNAIAGRGVHVVTVNDYLARRDAEWMGRLYRFLGMSTGVVVPQQPNDEKIAAYAADITYGTNNEFGFDYLRDNMEYRVEDRRQRALAYAIVDEVDSILIDEARTPLIISGQAEDHTELYVRMNAVPPLLTRMASEPKPHEPEPEGDYWVDEKSQQVFLSERGHENAERILSQQGILPEGESLYDPRHIALMHHLMVALRANTLFFRDQQYVVQDGEVVIVDEFTGRLMVGRRWSDGLHQAVEAKEGVKIQHENQTLASITFQNYFRMYDKLSGMTGTADTEAYEFQEIYNLETVIIPTNKPMIRKDQNDQVFKTAQEKYNAILNDIRDCHERGQPVLVGTTSIENSELLSGLLKQAKLPHEVLNAKQHAREAEIVAEAGKPGHITIATNMAGRGTDIVLGGSVDKQVDLIRADESLSEAEKEARIEKVRADWKPANEQVKAAGGLRIIGTERHESRRIDNQLRGRAGRQGDPGSSRFYLSLEDPLMRIFAGDRVRGIMERLKLPEGEPIEAGMVTRSIETAQRKVEGRNFDIRKQLLEYDDVANDQRKVLYAQRNEVLEASSIRPSVEALCEGAATDLVRQHIPADSVEEQWDVPALEQALAADWQIHLSLSDMLEKESSLTDDDILERVLEAVRGVYTGKIALVGEEAWAQFERSIMLQAIDTHWREHLSALDYLRQGIHLRGYAQKNPKQEYKREAFELFSGMLDRIRDDVVRVLLTVRVQSAEQVEQAAEAEASQPHVQNVQYHHSDYDEALAGTDADAQPAQQPVRNFMPKVGRNDPCPCGSGKKYKHCHGKLA</sequence>
<reference key="1">
    <citation type="journal article" date="2008" name="BMC Genomics">
        <title>The missing link: Bordetella petrii is endowed with both the metabolic versatility of environmental bacteria and virulence traits of pathogenic Bordetellae.</title>
        <authorList>
            <person name="Gross R."/>
            <person name="Guzman C.A."/>
            <person name="Sebaihia M."/>
            <person name="Martin dos Santos V.A.P."/>
            <person name="Pieper D.H."/>
            <person name="Koebnik R."/>
            <person name="Lechner M."/>
            <person name="Bartels D."/>
            <person name="Buhrmester J."/>
            <person name="Choudhuri J.V."/>
            <person name="Ebensen T."/>
            <person name="Gaigalat L."/>
            <person name="Herrmann S."/>
            <person name="Khachane A.N."/>
            <person name="Larisch C."/>
            <person name="Link S."/>
            <person name="Linke B."/>
            <person name="Meyer F."/>
            <person name="Mormann S."/>
            <person name="Nakunst D."/>
            <person name="Rueckert C."/>
            <person name="Schneiker-Bekel S."/>
            <person name="Schulze K."/>
            <person name="Voerholter F.-J."/>
            <person name="Yevsa T."/>
            <person name="Engle J.T."/>
            <person name="Goldman W.E."/>
            <person name="Puehler A."/>
            <person name="Goebel U.B."/>
            <person name="Goesmann A."/>
            <person name="Bloecker H."/>
            <person name="Kaiser O."/>
            <person name="Martinez-Arias R."/>
        </authorList>
    </citation>
    <scope>NUCLEOTIDE SEQUENCE [LARGE SCALE GENOMIC DNA]</scope>
    <source>
        <strain>ATCC BAA-461 / DSM 12804 / CCUG 43448</strain>
    </source>
</reference>
<protein>
    <recommendedName>
        <fullName evidence="1">Protein translocase subunit SecA</fullName>
        <ecNumber evidence="1">7.4.2.8</ecNumber>
    </recommendedName>
</protein>
<keyword id="KW-0067">ATP-binding</keyword>
<keyword id="KW-0997">Cell inner membrane</keyword>
<keyword id="KW-1003">Cell membrane</keyword>
<keyword id="KW-0963">Cytoplasm</keyword>
<keyword id="KW-0472">Membrane</keyword>
<keyword id="KW-0479">Metal-binding</keyword>
<keyword id="KW-0547">Nucleotide-binding</keyword>
<keyword id="KW-0653">Protein transport</keyword>
<keyword id="KW-1278">Translocase</keyword>
<keyword id="KW-0811">Translocation</keyword>
<keyword id="KW-0813">Transport</keyword>
<keyword id="KW-0862">Zinc</keyword>
<name>SECA_BORPD</name>
<feature type="chain" id="PRO_1000144979" description="Protein translocase subunit SecA">
    <location>
        <begin position="1"/>
        <end position="914"/>
    </location>
</feature>
<feature type="binding site" evidence="1">
    <location>
        <position position="86"/>
    </location>
    <ligand>
        <name>ATP</name>
        <dbReference type="ChEBI" id="CHEBI:30616"/>
    </ligand>
</feature>
<feature type="binding site" evidence="1">
    <location>
        <begin position="104"/>
        <end position="108"/>
    </location>
    <ligand>
        <name>ATP</name>
        <dbReference type="ChEBI" id="CHEBI:30616"/>
    </ligand>
</feature>
<feature type="binding site" evidence="1">
    <location>
        <position position="512"/>
    </location>
    <ligand>
        <name>ATP</name>
        <dbReference type="ChEBI" id="CHEBI:30616"/>
    </ligand>
</feature>
<feature type="binding site" evidence="1">
    <location>
        <position position="898"/>
    </location>
    <ligand>
        <name>Zn(2+)</name>
        <dbReference type="ChEBI" id="CHEBI:29105"/>
    </ligand>
</feature>
<feature type="binding site" evidence="1">
    <location>
        <position position="900"/>
    </location>
    <ligand>
        <name>Zn(2+)</name>
        <dbReference type="ChEBI" id="CHEBI:29105"/>
    </ligand>
</feature>
<feature type="binding site" evidence="1">
    <location>
        <position position="909"/>
    </location>
    <ligand>
        <name>Zn(2+)</name>
        <dbReference type="ChEBI" id="CHEBI:29105"/>
    </ligand>
</feature>
<feature type="binding site" evidence="1">
    <location>
        <position position="910"/>
    </location>
    <ligand>
        <name>Zn(2+)</name>
        <dbReference type="ChEBI" id="CHEBI:29105"/>
    </ligand>
</feature>
<gene>
    <name evidence="1" type="primary">secA</name>
    <name type="ordered locus">Bpet0706</name>
</gene>
<comment type="function">
    <text evidence="1">Part of the Sec protein translocase complex. Interacts with the SecYEG preprotein conducting channel. Has a central role in coupling the hydrolysis of ATP to the transfer of proteins into and across the cell membrane, serving both as a receptor for the preprotein-SecB complex and as an ATP-driven molecular motor driving the stepwise translocation of polypeptide chains across the membrane.</text>
</comment>
<comment type="catalytic activity">
    <reaction evidence="1">
        <text>ATP + H2O + cellular proteinSide 1 = ADP + phosphate + cellular proteinSide 2.</text>
        <dbReference type="EC" id="7.4.2.8"/>
    </reaction>
</comment>
<comment type="cofactor">
    <cofactor evidence="1">
        <name>Zn(2+)</name>
        <dbReference type="ChEBI" id="CHEBI:29105"/>
    </cofactor>
    <text evidence="1">May bind 1 zinc ion per subunit.</text>
</comment>
<comment type="subunit">
    <text evidence="1">Monomer and homodimer. Part of the essential Sec protein translocation apparatus which comprises SecA, SecYEG and auxiliary proteins SecDF-YajC and YidC.</text>
</comment>
<comment type="subcellular location">
    <subcellularLocation>
        <location evidence="1">Cell inner membrane</location>
        <topology evidence="1">Peripheral membrane protein</topology>
        <orientation evidence="1">Cytoplasmic side</orientation>
    </subcellularLocation>
    <subcellularLocation>
        <location evidence="1">Cytoplasm</location>
    </subcellularLocation>
    <text evidence="1">Distribution is 50-50.</text>
</comment>
<comment type="similarity">
    <text evidence="1">Belongs to the SecA family.</text>
</comment>
<evidence type="ECO:0000255" key="1">
    <source>
        <dbReference type="HAMAP-Rule" id="MF_01382"/>
    </source>
</evidence>